<organism>
    <name type="scientific">Pectobacterium carotovorum subsp. carotovorum (strain PC1)</name>
    <dbReference type="NCBI Taxonomy" id="561230"/>
    <lineage>
        <taxon>Bacteria</taxon>
        <taxon>Pseudomonadati</taxon>
        <taxon>Pseudomonadota</taxon>
        <taxon>Gammaproteobacteria</taxon>
        <taxon>Enterobacterales</taxon>
        <taxon>Pectobacteriaceae</taxon>
        <taxon>Pectobacterium</taxon>
    </lineage>
</organism>
<sequence length="95" mass="10305">MLHTLSCSPYHADLDTLLRGLDKGDALVLLQDGVIAALAGGNIIHRLLDSAVPLYALRPDVVARGMTEQISNSAVLIGYNEFVQLTVEHPQQLAW</sequence>
<feature type="chain" id="PRO_1000215514" description="Protein TusB">
    <location>
        <begin position="1"/>
        <end position="95"/>
    </location>
</feature>
<accession>C6DG83</accession>
<protein>
    <recommendedName>
        <fullName evidence="1">Protein TusB</fullName>
    </recommendedName>
    <alternativeName>
        <fullName evidence="1">tRNA 2-thiouridine synthesizing protein B</fullName>
    </alternativeName>
</protein>
<dbReference type="EMBL" id="CP001657">
    <property type="protein sequence ID" value="ACT14846.1"/>
    <property type="molecule type" value="Genomic_DNA"/>
</dbReference>
<dbReference type="RefSeq" id="WP_015841931.1">
    <property type="nucleotide sequence ID" value="NC_012917.1"/>
</dbReference>
<dbReference type="SMR" id="C6DG83"/>
<dbReference type="STRING" id="561230.PC1_3831"/>
<dbReference type="KEGG" id="pct:PC1_3831"/>
<dbReference type="eggNOG" id="COG2168">
    <property type="taxonomic scope" value="Bacteria"/>
</dbReference>
<dbReference type="HOGENOM" id="CLU_166087_2_1_6"/>
<dbReference type="OrthoDB" id="9795117at2"/>
<dbReference type="Proteomes" id="UP000002736">
    <property type="component" value="Chromosome"/>
</dbReference>
<dbReference type="GO" id="GO:1990228">
    <property type="term" value="C:sulfurtransferase complex"/>
    <property type="evidence" value="ECO:0007669"/>
    <property type="project" value="TreeGrafter"/>
</dbReference>
<dbReference type="GO" id="GO:0002143">
    <property type="term" value="P:tRNA wobble position uridine thiolation"/>
    <property type="evidence" value="ECO:0007669"/>
    <property type="project" value="InterPro"/>
</dbReference>
<dbReference type="Gene3D" id="3.40.1260.10">
    <property type="entry name" value="DsrEFH-like"/>
    <property type="match status" value="1"/>
</dbReference>
<dbReference type="HAMAP" id="MF_01564">
    <property type="entry name" value="Thiourid_synth_B"/>
    <property type="match status" value="1"/>
</dbReference>
<dbReference type="InterPro" id="IPR027396">
    <property type="entry name" value="DsrEFH-like"/>
</dbReference>
<dbReference type="InterPro" id="IPR023526">
    <property type="entry name" value="Sulphur_relay_TusB"/>
</dbReference>
<dbReference type="InterPro" id="IPR007215">
    <property type="entry name" value="Sulphur_relay_TusB/DsrH"/>
</dbReference>
<dbReference type="NCBIfam" id="NF010035">
    <property type="entry name" value="PRK13510.1"/>
    <property type="match status" value="1"/>
</dbReference>
<dbReference type="NCBIfam" id="TIGR03011">
    <property type="entry name" value="sulf_tusB_dsrH"/>
    <property type="match status" value="1"/>
</dbReference>
<dbReference type="PANTHER" id="PTHR37526">
    <property type="entry name" value="PROTEIN TUSB"/>
    <property type="match status" value="1"/>
</dbReference>
<dbReference type="PANTHER" id="PTHR37526:SF1">
    <property type="entry name" value="PROTEIN TUSB"/>
    <property type="match status" value="1"/>
</dbReference>
<dbReference type="Pfam" id="PF04077">
    <property type="entry name" value="DsrH"/>
    <property type="match status" value="1"/>
</dbReference>
<dbReference type="SUPFAM" id="SSF75169">
    <property type="entry name" value="DsrEFH-like"/>
    <property type="match status" value="1"/>
</dbReference>
<proteinExistence type="inferred from homology"/>
<evidence type="ECO:0000255" key="1">
    <source>
        <dbReference type="HAMAP-Rule" id="MF_01564"/>
    </source>
</evidence>
<comment type="function">
    <text evidence="1">Part of a sulfur-relay system required for 2-thiolation of 5-methylaminomethyl-2-thiouridine (mnm(5)s(2)U) at tRNA wobble positions.</text>
</comment>
<comment type="subunit">
    <text evidence="1">Heterohexamer, formed by a dimer of trimers. The hexameric TusBCD complex contains 2 copies each of TusB, TusC and TusD. The TusBCD complex interacts with TusE.</text>
</comment>
<comment type="subcellular location">
    <subcellularLocation>
        <location evidence="1">Cytoplasm</location>
    </subcellularLocation>
</comment>
<comment type="similarity">
    <text evidence="1">Belongs to the DsrH/TusB family.</text>
</comment>
<name>TUSB_PECCP</name>
<keyword id="KW-0963">Cytoplasm</keyword>
<keyword id="KW-0819">tRNA processing</keyword>
<gene>
    <name evidence="1" type="primary">tusB</name>
    <name type="ordered locus">PC1_3831</name>
</gene>
<reference key="1">
    <citation type="submission" date="2009-07" db="EMBL/GenBank/DDBJ databases">
        <title>Complete sequence of Pectobacterium carotovorum subsp. carotovorum PC1.</title>
        <authorList>
            <consortium name="US DOE Joint Genome Institute"/>
            <person name="Lucas S."/>
            <person name="Copeland A."/>
            <person name="Lapidus A."/>
            <person name="Glavina del Rio T."/>
            <person name="Tice H."/>
            <person name="Bruce D."/>
            <person name="Goodwin L."/>
            <person name="Pitluck S."/>
            <person name="Munk A.C."/>
            <person name="Brettin T."/>
            <person name="Detter J.C."/>
            <person name="Han C."/>
            <person name="Tapia R."/>
            <person name="Larimer F."/>
            <person name="Land M."/>
            <person name="Hauser L."/>
            <person name="Kyrpides N."/>
            <person name="Mikhailova N."/>
            <person name="Balakrishnan V."/>
            <person name="Glasner J."/>
            <person name="Perna N.T."/>
        </authorList>
    </citation>
    <scope>NUCLEOTIDE SEQUENCE [LARGE SCALE GENOMIC DNA]</scope>
    <source>
        <strain>PC1</strain>
    </source>
</reference>